<evidence type="ECO:0000255" key="1">
    <source>
        <dbReference type="HAMAP-Rule" id="MF_01111"/>
    </source>
</evidence>
<gene>
    <name type="ordered locus">TSIB_0920</name>
</gene>
<protein>
    <recommendedName>
        <fullName evidence="1">UPF0200 protein TSIB_0920</fullName>
    </recommendedName>
</protein>
<reference key="1">
    <citation type="journal article" date="2009" name="Appl. Environ. Microbiol.">
        <title>Metabolic versatility and indigenous origin of the archaeon Thermococcus sibiricus, isolated from a siberian oil reservoir, as revealed by genome analysis.</title>
        <authorList>
            <person name="Mardanov A.V."/>
            <person name="Ravin N.V."/>
            <person name="Svetlitchnyi V.A."/>
            <person name="Beletsky A.V."/>
            <person name="Miroshnichenko M.L."/>
            <person name="Bonch-Osmolovskaya E.A."/>
            <person name="Skryabin K.G."/>
        </authorList>
    </citation>
    <scope>NUCLEOTIDE SEQUENCE [LARGE SCALE GENOMIC DNA]</scope>
    <source>
        <strain>DSM 12597 / MM 739</strain>
    </source>
</reference>
<dbReference type="EMBL" id="CP001463">
    <property type="protein sequence ID" value="ACS89978.1"/>
    <property type="molecule type" value="Genomic_DNA"/>
</dbReference>
<dbReference type="RefSeq" id="WP_015849197.1">
    <property type="nucleotide sequence ID" value="NC_012883.1"/>
</dbReference>
<dbReference type="SMR" id="C6A2Y3"/>
<dbReference type="STRING" id="604354.TSIB_0920"/>
<dbReference type="GeneID" id="8095914"/>
<dbReference type="KEGG" id="tsi:TSIB_0920"/>
<dbReference type="eggNOG" id="arCOG01045">
    <property type="taxonomic scope" value="Archaea"/>
</dbReference>
<dbReference type="HOGENOM" id="CLU_096329_1_0_2"/>
<dbReference type="OrthoDB" id="85381at2157"/>
<dbReference type="Proteomes" id="UP000009079">
    <property type="component" value="Chromosome"/>
</dbReference>
<dbReference type="GO" id="GO:0005524">
    <property type="term" value="F:ATP binding"/>
    <property type="evidence" value="ECO:0007669"/>
    <property type="project" value="UniProtKB-UniRule"/>
</dbReference>
<dbReference type="Gene3D" id="3.40.50.300">
    <property type="entry name" value="P-loop containing nucleotide triphosphate hydrolases"/>
    <property type="match status" value="1"/>
</dbReference>
<dbReference type="HAMAP" id="MF_01111">
    <property type="entry name" value="UPF0200"/>
    <property type="match status" value="1"/>
</dbReference>
<dbReference type="InterPro" id="IPR022970">
    <property type="entry name" value="NTP_hydrolase-rel"/>
</dbReference>
<dbReference type="InterPro" id="IPR027417">
    <property type="entry name" value="P-loop_NTPase"/>
</dbReference>
<dbReference type="PANTHER" id="PTHR41930:SF1">
    <property type="entry name" value="DEPHOSPHO-COA KINASE"/>
    <property type="match status" value="1"/>
</dbReference>
<dbReference type="PANTHER" id="PTHR41930">
    <property type="entry name" value="UPF0200 PROTEIN MJ1399"/>
    <property type="match status" value="1"/>
</dbReference>
<dbReference type="Pfam" id="PF13207">
    <property type="entry name" value="AAA_17"/>
    <property type="match status" value="1"/>
</dbReference>
<dbReference type="SUPFAM" id="SSF52540">
    <property type="entry name" value="P-loop containing nucleoside triphosphate hydrolases"/>
    <property type="match status" value="1"/>
</dbReference>
<sequence length="190" mass="21602">MIICVVGMPGSGKGQIVRIFGKYGIPHVSMGDIVREEADRRGVPRTPEGMNSVSIQLRQELGDNAVAKLAIPKVRELLKTHEAVIIEGVRSLDEIQAFKDAFPEEKVIIIAVHSSPQKRFERLSKRGRSDDPKSWSEFEARDWKELKFGLGNVIALADYLIVNESHLTQYRRKIERLAERLGIKKKYFTF</sequence>
<keyword id="KW-0067">ATP-binding</keyword>
<keyword id="KW-0547">Nucleotide-binding</keyword>
<keyword id="KW-1185">Reference proteome</keyword>
<accession>C6A2Y3</accession>
<organism>
    <name type="scientific">Thermococcus sibiricus (strain DSM 12597 / MM 739)</name>
    <dbReference type="NCBI Taxonomy" id="604354"/>
    <lineage>
        <taxon>Archaea</taxon>
        <taxon>Methanobacteriati</taxon>
        <taxon>Methanobacteriota</taxon>
        <taxon>Thermococci</taxon>
        <taxon>Thermococcales</taxon>
        <taxon>Thermococcaceae</taxon>
        <taxon>Thermococcus</taxon>
    </lineage>
</organism>
<comment type="similarity">
    <text evidence="1">Belongs to the UPF0200 family.</text>
</comment>
<feature type="chain" id="PRO_1000213582" description="UPF0200 protein TSIB_0920">
    <location>
        <begin position="1"/>
        <end position="190"/>
    </location>
</feature>
<feature type="binding site" evidence="1">
    <location>
        <begin position="7"/>
        <end position="14"/>
    </location>
    <ligand>
        <name>ATP</name>
        <dbReference type="ChEBI" id="CHEBI:30616"/>
    </ligand>
</feature>
<name>Y920_THESM</name>
<proteinExistence type="inferred from homology"/>